<proteinExistence type="inferred from homology"/>
<dbReference type="EC" id="3.1.1.96" evidence="1"/>
<dbReference type="EMBL" id="CP000958">
    <property type="protein sequence ID" value="ACA89829.1"/>
    <property type="molecule type" value="Genomic_DNA"/>
</dbReference>
<dbReference type="RefSeq" id="WP_011544595.1">
    <property type="nucleotide sequence ID" value="NC_010508.1"/>
</dbReference>
<dbReference type="SMR" id="B1JVU9"/>
<dbReference type="GeneID" id="83047451"/>
<dbReference type="KEGG" id="bcm:Bcenmc03_0651"/>
<dbReference type="HOGENOM" id="CLU_076901_1_1_4"/>
<dbReference type="Proteomes" id="UP000002169">
    <property type="component" value="Chromosome 1"/>
</dbReference>
<dbReference type="GO" id="GO:0005737">
    <property type="term" value="C:cytoplasm"/>
    <property type="evidence" value="ECO:0007669"/>
    <property type="project" value="UniProtKB-SubCell"/>
</dbReference>
<dbReference type="GO" id="GO:0051500">
    <property type="term" value="F:D-tyrosyl-tRNA(Tyr) deacylase activity"/>
    <property type="evidence" value="ECO:0007669"/>
    <property type="project" value="TreeGrafter"/>
</dbReference>
<dbReference type="GO" id="GO:0106026">
    <property type="term" value="F:Gly-tRNA(Ala) deacylase activity"/>
    <property type="evidence" value="ECO:0007669"/>
    <property type="project" value="UniProtKB-UniRule"/>
</dbReference>
<dbReference type="GO" id="GO:0043908">
    <property type="term" value="F:Ser(Gly)-tRNA(Ala) hydrolase activity"/>
    <property type="evidence" value="ECO:0007669"/>
    <property type="project" value="UniProtKB-UniRule"/>
</dbReference>
<dbReference type="GO" id="GO:0000049">
    <property type="term" value="F:tRNA binding"/>
    <property type="evidence" value="ECO:0007669"/>
    <property type="project" value="UniProtKB-UniRule"/>
</dbReference>
<dbReference type="GO" id="GO:0019478">
    <property type="term" value="P:D-amino acid catabolic process"/>
    <property type="evidence" value="ECO:0007669"/>
    <property type="project" value="UniProtKB-UniRule"/>
</dbReference>
<dbReference type="CDD" id="cd00563">
    <property type="entry name" value="Dtyr_deacylase"/>
    <property type="match status" value="1"/>
</dbReference>
<dbReference type="FunFam" id="3.50.80.10:FF:000001">
    <property type="entry name" value="D-aminoacyl-tRNA deacylase"/>
    <property type="match status" value="1"/>
</dbReference>
<dbReference type="Gene3D" id="3.50.80.10">
    <property type="entry name" value="D-tyrosyl-tRNA(Tyr) deacylase"/>
    <property type="match status" value="1"/>
</dbReference>
<dbReference type="HAMAP" id="MF_00518">
    <property type="entry name" value="Deacylase_Dtd"/>
    <property type="match status" value="1"/>
</dbReference>
<dbReference type="InterPro" id="IPR003732">
    <property type="entry name" value="Daa-tRNA_deacyls_DTD"/>
</dbReference>
<dbReference type="InterPro" id="IPR023509">
    <property type="entry name" value="DTD-like_sf"/>
</dbReference>
<dbReference type="NCBIfam" id="TIGR00256">
    <property type="entry name" value="D-aminoacyl-tRNA deacylase"/>
    <property type="match status" value="1"/>
</dbReference>
<dbReference type="PANTHER" id="PTHR10472:SF5">
    <property type="entry name" value="D-AMINOACYL-TRNA DEACYLASE 1"/>
    <property type="match status" value="1"/>
</dbReference>
<dbReference type="PANTHER" id="PTHR10472">
    <property type="entry name" value="D-TYROSYL-TRNA TYR DEACYLASE"/>
    <property type="match status" value="1"/>
</dbReference>
<dbReference type="Pfam" id="PF02580">
    <property type="entry name" value="Tyr_Deacylase"/>
    <property type="match status" value="1"/>
</dbReference>
<dbReference type="SUPFAM" id="SSF69500">
    <property type="entry name" value="DTD-like"/>
    <property type="match status" value="1"/>
</dbReference>
<organism>
    <name type="scientific">Burkholderia orbicola (strain MC0-3)</name>
    <dbReference type="NCBI Taxonomy" id="406425"/>
    <lineage>
        <taxon>Bacteria</taxon>
        <taxon>Pseudomonadati</taxon>
        <taxon>Pseudomonadota</taxon>
        <taxon>Betaproteobacteria</taxon>
        <taxon>Burkholderiales</taxon>
        <taxon>Burkholderiaceae</taxon>
        <taxon>Burkholderia</taxon>
        <taxon>Burkholderia cepacia complex</taxon>
        <taxon>Burkholderia orbicola</taxon>
    </lineage>
</organism>
<gene>
    <name evidence="1" type="primary">dtd</name>
    <name type="ordered locus">Bcenmc03_0651</name>
</gene>
<comment type="function">
    <text evidence="1">An aminoacyl-tRNA editing enzyme that deacylates mischarged D-aminoacyl-tRNAs. Also deacylates mischarged glycyl-tRNA(Ala), protecting cells against glycine mischarging by AlaRS. Acts via tRNA-based rather than protein-based catalysis; rejects L-amino acids rather than detecting D-amino acids in the active site. By recycling D-aminoacyl-tRNA to D-amino acids and free tRNA molecules, this enzyme counteracts the toxicity associated with the formation of D-aminoacyl-tRNA entities in vivo and helps enforce protein L-homochirality.</text>
</comment>
<comment type="catalytic activity">
    <reaction evidence="1">
        <text>glycyl-tRNA(Ala) + H2O = tRNA(Ala) + glycine + H(+)</text>
        <dbReference type="Rhea" id="RHEA:53744"/>
        <dbReference type="Rhea" id="RHEA-COMP:9657"/>
        <dbReference type="Rhea" id="RHEA-COMP:13640"/>
        <dbReference type="ChEBI" id="CHEBI:15377"/>
        <dbReference type="ChEBI" id="CHEBI:15378"/>
        <dbReference type="ChEBI" id="CHEBI:57305"/>
        <dbReference type="ChEBI" id="CHEBI:78442"/>
        <dbReference type="ChEBI" id="CHEBI:78522"/>
        <dbReference type="EC" id="3.1.1.96"/>
    </reaction>
</comment>
<comment type="catalytic activity">
    <reaction evidence="1">
        <text>a D-aminoacyl-tRNA + H2O = a tRNA + a D-alpha-amino acid + H(+)</text>
        <dbReference type="Rhea" id="RHEA:13953"/>
        <dbReference type="Rhea" id="RHEA-COMP:10123"/>
        <dbReference type="Rhea" id="RHEA-COMP:10124"/>
        <dbReference type="ChEBI" id="CHEBI:15377"/>
        <dbReference type="ChEBI" id="CHEBI:15378"/>
        <dbReference type="ChEBI" id="CHEBI:59871"/>
        <dbReference type="ChEBI" id="CHEBI:78442"/>
        <dbReference type="ChEBI" id="CHEBI:79333"/>
        <dbReference type="EC" id="3.1.1.96"/>
    </reaction>
</comment>
<comment type="subunit">
    <text evidence="1">Homodimer.</text>
</comment>
<comment type="subcellular location">
    <subcellularLocation>
        <location evidence="1">Cytoplasm</location>
    </subcellularLocation>
</comment>
<comment type="domain">
    <text evidence="1">A Gly-cisPro motif from one monomer fits into the active site of the other monomer to allow specific chiral rejection of L-amino acids.</text>
</comment>
<comment type="similarity">
    <text evidence="1">Belongs to the DTD family.</text>
</comment>
<keyword id="KW-0963">Cytoplasm</keyword>
<keyword id="KW-0378">Hydrolase</keyword>
<keyword id="KW-0694">RNA-binding</keyword>
<keyword id="KW-0820">tRNA-binding</keyword>
<accession>B1JVU9</accession>
<reference key="1">
    <citation type="submission" date="2008-02" db="EMBL/GenBank/DDBJ databases">
        <title>Complete sequence of chromosome 1 of Burkholderia cenocepacia MC0-3.</title>
        <authorList>
            <person name="Copeland A."/>
            <person name="Lucas S."/>
            <person name="Lapidus A."/>
            <person name="Barry K."/>
            <person name="Bruce D."/>
            <person name="Goodwin L."/>
            <person name="Glavina del Rio T."/>
            <person name="Dalin E."/>
            <person name="Tice H."/>
            <person name="Pitluck S."/>
            <person name="Chain P."/>
            <person name="Malfatti S."/>
            <person name="Shin M."/>
            <person name="Vergez L."/>
            <person name="Schmutz J."/>
            <person name="Larimer F."/>
            <person name="Land M."/>
            <person name="Hauser L."/>
            <person name="Kyrpides N."/>
            <person name="Mikhailova N."/>
            <person name="Tiedje J."/>
            <person name="Richardson P."/>
        </authorList>
    </citation>
    <scope>NUCLEOTIDE SEQUENCE [LARGE SCALE GENOMIC DNA]</scope>
    <source>
        <strain>MC0-3</strain>
    </source>
</reference>
<feature type="chain" id="PRO_1000127498" description="D-aminoacyl-tRNA deacylase">
    <location>
        <begin position="1"/>
        <end position="152"/>
    </location>
</feature>
<feature type="short sequence motif" description="Gly-cisPro motif, important for rejection of L-amino acids" evidence="1">
    <location>
        <begin position="142"/>
        <end position="143"/>
    </location>
</feature>
<sequence length="152" mass="15998">MIALIQRVTRADVRVGGRTTGEIGAGLLALVCAERGDTEAAADKLLAKLLGYRVFSDAAGKMNLPVSNIDGEGRAGGLLLVSQFTLAADTNSGLRPSFTPAAPPDEGARLFDYFVAAARARHPIVETGEFGADMQVSLVNDGPVTFWLQVRP</sequence>
<protein>
    <recommendedName>
        <fullName evidence="1">D-aminoacyl-tRNA deacylase</fullName>
        <shortName evidence="1">DTD</shortName>
        <ecNumber evidence="1">3.1.1.96</ecNumber>
    </recommendedName>
    <alternativeName>
        <fullName evidence="1">Gly-tRNA(Ala) deacylase</fullName>
    </alternativeName>
</protein>
<name>DTD_BURO0</name>
<evidence type="ECO:0000255" key="1">
    <source>
        <dbReference type="HAMAP-Rule" id="MF_00518"/>
    </source>
</evidence>